<organism>
    <name type="scientific">Schizosaccharomyces pombe (strain 972 / ATCC 24843)</name>
    <name type="common">Fission yeast</name>
    <dbReference type="NCBI Taxonomy" id="284812"/>
    <lineage>
        <taxon>Eukaryota</taxon>
        <taxon>Fungi</taxon>
        <taxon>Dikarya</taxon>
        <taxon>Ascomycota</taxon>
        <taxon>Taphrinomycotina</taxon>
        <taxon>Schizosaccharomycetes</taxon>
        <taxon>Schizosaccharomycetales</taxon>
        <taxon>Schizosaccharomycetaceae</taxon>
        <taxon>Schizosaccharomyces</taxon>
    </lineage>
</organism>
<sequence length="139" mass="14699">MATNVGPQIRSGELVFGVAHIFASFNDTFVHITDLTGKETIVRVTGGMKVKTDRDESSPYAAMLAAQDAAAKCKEVGITALHIKIRATGGTATKTPGPGAQAALRALARAGMRIGRIEDVTPIPTDSTRRKGGRRGRRL</sequence>
<evidence type="ECO:0000250" key="1">
    <source>
        <dbReference type="UniProtKB" id="P06367"/>
    </source>
</evidence>
<evidence type="ECO:0000256" key="2">
    <source>
        <dbReference type="SAM" id="MobiDB-lite"/>
    </source>
</evidence>
<evidence type="ECO:0000269" key="3">
    <source>
    </source>
</evidence>
<evidence type="ECO:0000305" key="4"/>
<reference key="1">
    <citation type="submission" date="2001-03" db="EMBL/GenBank/DDBJ databases">
        <title>Evolution of ribosomal protein S14 gene structure: Candida albicans, Schizosaccharomyces pombe, and selected ascomycetous fungi.</title>
        <authorList>
            <person name="Burke T.J."/>
            <person name="Rhoads D.D."/>
        </authorList>
    </citation>
    <scope>NUCLEOTIDE SEQUENCE [GENOMIC DNA]</scope>
    <source>
        <strain>972 / ATCC 24843</strain>
    </source>
</reference>
<reference key="2">
    <citation type="journal article" date="2002" name="Nature">
        <title>The genome sequence of Schizosaccharomyces pombe.</title>
        <authorList>
            <person name="Wood V."/>
            <person name="Gwilliam R."/>
            <person name="Rajandream M.A."/>
            <person name="Lyne M.H."/>
            <person name="Lyne R."/>
            <person name="Stewart A."/>
            <person name="Sgouros J.G."/>
            <person name="Peat N."/>
            <person name="Hayles J."/>
            <person name="Baker S.G."/>
            <person name="Basham D."/>
            <person name="Bowman S."/>
            <person name="Brooks K."/>
            <person name="Brown D."/>
            <person name="Brown S."/>
            <person name="Chillingworth T."/>
            <person name="Churcher C.M."/>
            <person name="Collins M."/>
            <person name="Connor R."/>
            <person name="Cronin A."/>
            <person name="Davis P."/>
            <person name="Feltwell T."/>
            <person name="Fraser A."/>
            <person name="Gentles S."/>
            <person name="Goble A."/>
            <person name="Hamlin N."/>
            <person name="Harris D.E."/>
            <person name="Hidalgo J."/>
            <person name="Hodgson G."/>
            <person name="Holroyd S."/>
            <person name="Hornsby T."/>
            <person name="Howarth S."/>
            <person name="Huckle E.J."/>
            <person name="Hunt S."/>
            <person name="Jagels K."/>
            <person name="James K.D."/>
            <person name="Jones L."/>
            <person name="Jones M."/>
            <person name="Leather S."/>
            <person name="McDonald S."/>
            <person name="McLean J."/>
            <person name="Mooney P."/>
            <person name="Moule S."/>
            <person name="Mungall K.L."/>
            <person name="Murphy L.D."/>
            <person name="Niblett D."/>
            <person name="Odell C."/>
            <person name="Oliver K."/>
            <person name="O'Neil S."/>
            <person name="Pearson D."/>
            <person name="Quail M.A."/>
            <person name="Rabbinowitsch E."/>
            <person name="Rutherford K.M."/>
            <person name="Rutter S."/>
            <person name="Saunders D."/>
            <person name="Seeger K."/>
            <person name="Sharp S."/>
            <person name="Skelton J."/>
            <person name="Simmonds M.N."/>
            <person name="Squares R."/>
            <person name="Squares S."/>
            <person name="Stevens K."/>
            <person name="Taylor K."/>
            <person name="Taylor R.G."/>
            <person name="Tivey A."/>
            <person name="Walsh S.V."/>
            <person name="Warren T."/>
            <person name="Whitehead S."/>
            <person name="Woodward J.R."/>
            <person name="Volckaert G."/>
            <person name="Aert R."/>
            <person name="Robben J."/>
            <person name="Grymonprez B."/>
            <person name="Weltjens I."/>
            <person name="Vanstreels E."/>
            <person name="Rieger M."/>
            <person name="Schaefer M."/>
            <person name="Mueller-Auer S."/>
            <person name="Gabel C."/>
            <person name="Fuchs M."/>
            <person name="Duesterhoeft A."/>
            <person name="Fritzc C."/>
            <person name="Holzer E."/>
            <person name="Moestl D."/>
            <person name="Hilbert H."/>
            <person name="Borzym K."/>
            <person name="Langer I."/>
            <person name="Beck A."/>
            <person name="Lehrach H."/>
            <person name="Reinhardt R."/>
            <person name="Pohl T.M."/>
            <person name="Eger P."/>
            <person name="Zimmermann W."/>
            <person name="Wedler H."/>
            <person name="Wambutt R."/>
            <person name="Purnelle B."/>
            <person name="Goffeau A."/>
            <person name="Cadieu E."/>
            <person name="Dreano S."/>
            <person name="Gloux S."/>
            <person name="Lelaure V."/>
            <person name="Mottier S."/>
            <person name="Galibert F."/>
            <person name="Aves S.J."/>
            <person name="Xiang Z."/>
            <person name="Hunt C."/>
            <person name="Moore K."/>
            <person name="Hurst S.M."/>
            <person name="Lucas M."/>
            <person name="Rochet M."/>
            <person name="Gaillardin C."/>
            <person name="Tallada V.A."/>
            <person name="Garzon A."/>
            <person name="Thode G."/>
            <person name="Daga R.R."/>
            <person name="Cruzado L."/>
            <person name="Jimenez J."/>
            <person name="Sanchez M."/>
            <person name="del Rey F."/>
            <person name="Benito J."/>
            <person name="Dominguez A."/>
            <person name="Revuelta J.L."/>
            <person name="Moreno S."/>
            <person name="Armstrong J."/>
            <person name="Forsburg S.L."/>
            <person name="Cerutti L."/>
            <person name="Lowe T."/>
            <person name="McCombie W.R."/>
            <person name="Paulsen I."/>
            <person name="Potashkin J."/>
            <person name="Shpakovski G.V."/>
            <person name="Ussery D."/>
            <person name="Barrell B.G."/>
            <person name="Nurse P."/>
        </authorList>
    </citation>
    <scope>NUCLEOTIDE SEQUENCE [LARGE SCALE GENOMIC DNA]</scope>
    <source>
        <strain>972 / ATCC 24843</strain>
    </source>
</reference>
<reference key="3">
    <citation type="journal article" date="2006" name="Nat. Biotechnol.">
        <title>ORFeome cloning and global analysis of protein localization in the fission yeast Schizosaccharomyces pombe.</title>
        <authorList>
            <person name="Matsuyama A."/>
            <person name="Arai R."/>
            <person name="Yashiroda Y."/>
            <person name="Shirai A."/>
            <person name="Kamata A."/>
            <person name="Sekido S."/>
            <person name="Kobayashi Y."/>
            <person name="Hashimoto A."/>
            <person name="Hamamoto M."/>
            <person name="Hiraoka Y."/>
            <person name="Horinouchi S."/>
            <person name="Yoshida M."/>
        </authorList>
    </citation>
    <scope>SUBCELLULAR LOCATION [LARGE SCALE ANALYSIS]</scope>
</reference>
<protein>
    <recommendedName>
        <fullName evidence="4">Small ribosomal subunit protein uS11A</fullName>
    </recommendedName>
    <alternativeName>
        <fullName>40S ribosomal protein S14-A</fullName>
    </alternativeName>
</protein>
<gene>
    <name type="primary">rps1401</name>
    <name type="synonym">rps14a</name>
    <name type="ORF">SPAC3H5.05c</name>
</gene>
<dbReference type="EMBL" id="AF365405">
    <property type="protein sequence ID" value="AAK60138.1"/>
    <property type="molecule type" value="Genomic_DNA"/>
</dbReference>
<dbReference type="EMBL" id="CU329670">
    <property type="protein sequence ID" value="CAB16591.1"/>
    <property type="molecule type" value="Genomic_DNA"/>
</dbReference>
<dbReference type="PIR" id="T38751">
    <property type="entry name" value="T38751"/>
</dbReference>
<dbReference type="RefSeq" id="NP_594187.1">
    <property type="nucleotide sequence ID" value="NM_001019611.2"/>
</dbReference>
<dbReference type="SMR" id="P0CT56"/>
<dbReference type="FunCoup" id="P0CT56">
    <property type="interactions" value="424"/>
</dbReference>
<dbReference type="STRING" id="284812.P0CT56"/>
<dbReference type="iPTMnet" id="P0CT56"/>
<dbReference type="PaxDb" id="4896-SPAC3H5.05c.1"/>
<dbReference type="EnsemblFungi" id="SPAC3H5.05c.1">
    <property type="protein sequence ID" value="SPAC3H5.05c.1:pep"/>
    <property type="gene ID" value="SPAC3H5.05c"/>
</dbReference>
<dbReference type="EnsemblFungi" id="SPBC18H10.13.1">
    <property type="protein sequence ID" value="SPBC18H10.13.1:pep"/>
    <property type="gene ID" value="SPBC18H10.13"/>
</dbReference>
<dbReference type="GeneID" id="2540817"/>
<dbReference type="KEGG" id="spo:2540817"/>
<dbReference type="KEGG" id="spo:5802781"/>
<dbReference type="PomBase" id="SPAC3H5.05c">
    <property type="gene designation" value="rps1401"/>
</dbReference>
<dbReference type="VEuPathDB" id="FungiDB:SPAC3H5.05c"/>
<dbReference type="VEuPathDB" id="FungiDB:SPBC18H10.13"/>
<dbReference type="eggNOG" id="KOG0407">
    <property type="taxonomic scope" value="Eukaryota"/>
</dbReference>
<dbReference type="InParanoid" id="P0CT56"/>
<dbReference type="OMA" id="IYASHND"/>
<dbReference type="PhylomeDB" id="P0CT56"/>
<dbReference type="Reactome" id="R-SPO-156827">
    <property type="pathway name" value="L13a-mediated translational silencing of Ceruloplasmin expression"/>
</dbReference>
<dbReference type="Reactome" id="R-SPO-1799339">
    <property type="pathway name" value="SRP-dependent cotranslational protein targeting to membrane"/>
</dbReference>
<dbReference type="Reactome" id="R-SPO-6791226">
    <property type="pathway name" value="Major pathway of rRNA processing in the nucleolus and cytosol"/>
</dbReference>
<dbReference type="Reactome" id="R-SPO-72649">
    <property type="pathway name" value="Translation initiation complex formation"/>
</dbReference>
<dbReference type="Reactome" id="R-SPO-72689">
    <property type="pathway name" value="Formation of a pool of free 40S subunits"/>
</dbReference>
<dbReference type="Reactome" id="R-SPO-72695">
    <property type="pathway name" value="Formation of the ternary complex, and subsequently, the 43S complex"/>
</dbReference>
<dbReference type="Reactome" id="R-SPO-72702">
    <property type="pathway name" value="Ribosomal scanning and start codon recognition"/>
</dbReference>
<dbReference type="Reactome" id="R-SPO-72706">
    <property type="pathway name" value="GTP hydrolysis and joining of the 60S ribosomal subunit"/>
</dbReference>
<dbReference type="Reactome" id="R-SPO-975956">
    <property type="pathway name" value="Nonsense Mediated Decay (NMD) independent of the Exon Junction Complex (EJC)"/>
</dbReference>
<dbReference type="Reactome" id="R-SPO-975957">
    <property type="pathway name" value="Nonsense Mediated Decay (NMD) enhanced by the Exon Junction Complex (EJC)"/>
</dbReference>
<dbReference type="PRO" id="PR:P0CT56"/>
<dbReference type="Proteomes" id="UP000002485">
    <property type="component" value="Chromosome I"/>
</dbReference>
<dbReference type="GO" id="GO:0005829">
    <property type="term" value="C:cytosol"/>
    <property type="evidence" value="ECO:0007005"/>
    <property type="project" value="PomBase"/>
</dbReference>
<dbReference type="GO" id="GO:0022627">
    <property type="term" value="C:cytosolic small ribosomal subunit"/>
    <property type="evidence" value="ECO:0000318"/>
    <property type="project" value="GO_Central"/>
</dbReference>
<dbReference type="GO" id="GO:0005730">
    <property type="term" value="C:nucleolus"/>
    <property type="evidence" value="ECO:0007005"/>
    <property type="project" value="PomBase"/>
</dbReference>
<dbReference type="GO" id="GO:0005634">
    <property type="term" value="C:nucleus"/>
    <property type="evidence" value="ECO:0007005"/>
    <property type="project" value="PomBase"/>
</dbReference>
<dbReference type="GO" id="GO:0003735">
    <property type="term" value="F:structural constituent of ribosome"/>
    <property type="evidence" value="ECO:0000318"/>
    <property type="project" value="GO_Central"/>
</dbReference>
<dbReference type="GO" id="GO:0002181">
    <property type="term" value="P:cytoplasmic translation"/>
    <property type="evidence" value="ECO:0000266"/>
    <property type="project" value="PomBase"/>
</dbReference>
<dbReference type="GO" id="GO:0000028">
    <property type="term" value="P:ribosomal small subunit assembly"/>
    <property type="evidence" value="ECO:0000318"/>
    <property type="project" value="GO_Central"/>
</dbReference>
<dbReference type="GO" id="GO:0006412">
    <property type="term" value="P:translation"/>
    <property type="evidence" value="ECO:0000318"/>
    <property type="project" value="GO_Central"/>
</dbReference>
<dbReference type="FunFam" id="3.30.420.80:FF:000002">
    <property type="entry name" value="40S ribosomal protein S14"/>
    <property type="match status" value="1"/>
</dbReference>
<dbReference type="Gene3D" id="3.30.420.80">
    <property type="entry name" value="Ribosomal protein S11"/>
    <property type="match status" value="1"/>
</dbReference>
<dbReference type="HAMAP" id="MF_01310">
    <property type="entry name" value="Ribosomal_uS11"/>
    <property type="match status" value="1"/>
</dbReference>
<dbReference type="InterPro" id="IPR001971">
    <property type="entry name" value="Ribosomal_uS11"/>
</dbReference>
<dbReference type="InterPro" id="IPR018102">
    <property type="entry name" value="Ribosomal_uS11_CS"/>
</dbReference>
<dbReference type="InterPro" id="IPR036967">
    <property type="entry name" value="Ribosomal_uS11_sf"/>
</dbReference>
<dbReference type="NCBIfam" id="NF007176">
    <property type="entry name" value="PRK09607.1"/>
    <property type="match status" value="1"/>
</dbReference>
<dbReference type="PANTHER" id="PTHR11759">
    <property type="entry name" value="40S RIBOSOMAL PROTEIN S14/30S RIBOSOMAL PROTEIN S11"/>
    <property type="match status" value="1"/>
</dbReference>
<dbReference type="Pfam" id="PF00411">
    <property type="entry name" value="Ribosomal_S11"/>
    <property type="match status" value="1"/>
</dbReference>
<dbReference type="PIRSF" id="PIRSF002131">
    <property type="entry name" value="Ribosomal_S11"/>
    <property type="match status" value="1"/>
</dbReference>
<dbReference type="SUPFAM" id="SSF53137">
    <property type="entry name" value="Translational machinery components"/>
    <property type="match status" value="1"/>
</dbReference>
<dbReference type="PROSITE" id="PS00054">
    <property type="entry name" value="RIBOSOMAL_S11"/>
    <property type="match status" value="1"/>
</dbReference>
<proteinExistence type="inferred from homology"/>
<keyword id="KW-0963">Cytoplasm</keyword>
<keyword id="KW-0539">Nucleus</keyword>
<keyword id="KW-1185">Reference proteome</keyword>
<keyword id="KW-0687">Ribonucleoprotein</keyword>
<keyword id="KW-0689">Ribosomal protein</keyword>
<comment type="function">
    <text evidence="1">Component of the ribosome, a large ribonucleoprotein complex responsible for the synthesis of proteins in the cell. The small ribosomal subunit (SSU) binds messenger RNAs (mRNAs) and translates the encoded message by selecting cognate aminoacyl-transfer RNA (tRNA) molecules. The large subunit (LSU) contains the ribosomal catalytic site termed the peptidyl transferase center (PTC), which catalyzes the formation of peptide bonds, thereby polymerizing the amino acids delivered by tRNAs into a polypeptide chain. The nascent polypeptides leave the ribosome through a tunnel in the LSU and interact with protein factors that function in enzymatic processing, targeting, and the membrane insertion of nascent chains at the exit of the ribosomal tunnel. uS11 is involved in nucleolar processing of pre-18S ribosomal RNA and ribosome assembly.</text>
</comment>
<comment type="subunit">
    <text evidence="1">Component of the small ribosomal subunit (SSU). Mature yeast ribosomes consist of a small (40S) and a large (60S) subunit. The 40S small subunit contains 1 molecule of ribosomal RNA (18S rRNA) and at least 33 different proteins. The large 60S subunit contains 3 rRNA molecules (25S, 5.8S and 5S rRNA) and at least 46 different proteins. uS11 interacts with eS1 forming part of the mRNA exit tunnel. uS11 interacts with snoRNA U3. uS11 interacts with MPP10. Component of the ribosomal small subunit (SSU) processome composed of at least 40 protein subunits and snoRNA U3.</text>
</comment>
<comment type="subcellular location">
    <subcellularLocation>
        <location evidence="3">Cytoplasm</location>
    </subcellularLocation>
    <subcellularLocation>
        <location evidence="3">Nucleus</location>
    </subcellularLocation>
    <subcellularLocation>
        <location evidence="3">Nucleus</location>
        <location evidence="3">Nucleolus</location>
    </subcellularLocation>
</comment>
<comment type="miscellaneous">
    <text>There are 2 genes for uS11 in S.pombe.</text>
</comment>
<comment type="similarity">
    <text evidence="4">Belongs to the universal ribosomal protein uS11 family.</text>
</comment>
<name>RS14A_SCHPO</name>
<accession>P0CT56</accession>
<accession>O14150</accession>
<accession>Q96W57</accession>
<feature type="chain" id="PRO_0000123358" description="Small ribosomal subunit protein uS11A">
    <location>
        <begin position="1"/>
        <end position="139"/>
    </location>
</feature>
<feature type="region of interest" description="Disordered" evidence="2">
    <location>
        <begin position="119"/>
        <end position="139"/>
    </location>
</feature>
<feature type="compositionally biased region" description="Basic residues" evidence="2">
    <location>
        <begin position="130"/>
        <end position="139"/>
    </location>
</feature>
<feature type="sequence conflict" description="In Ref. 1; AAK60138." evidence="4" ref="1">
    <original>GA</original>
    <variation>VS</variation>
    <location>
        <begin position="99"/>
        <end position="100"/>
    </location>
</feature>